<protein>
    <recommendedName>
        <fullName evidence="1">Large ribosomal subunit protein bL12</fullName>
    </recommendedName>
    <alternativeName>
        <fullName evidence="2">50S ribosomal protein L7/L12</fullName>
    </alternativeName>
</protein>
<dbReference type="EMBL" id="CP000241">
    <property type="protein sequence ID" value="ABF85205.1"/>
    <property type="molecule type" value="Genomic_DNA"/>
</dbReference>
<dbReference type="RefSeq" id="WP_001018228.1">
    <property type="nucleotide sequence ID" value="NC_008086.1"/>
</dbReference>
<dbReference type="SMR" id="Q1CS67"/>
<dbReference type="GeneID" id="93237673"/>
<dbReference type="KEGG" id="hpa:HPAG1_1138"/>
<dbReference type="HOGENOM" id="CLU_086499_3_2_7"/>
<dbReference type="GO" id="GO:0022625">
    <property type="term" value="C:cytosolic large ribosomal subunit"/>
    <property type="evidence" value="ECO:0007669"/>
    <property type="project" value="TreeGrafter"/>
</dbReference>
<dbReference type="GO" id="GO:0003729">
    <property type="term" value="F:mRNA binding"/>
    <property type="evidence" value="ECO:0007669"/>
    <property type="project" value="TreeGrafter"/>
</dbReference>
<dbReference type="GO" id="GO:0003735">
    <property type="term" value="F:structural constituent of ribosome"/>
    <property type="evidence" value="ECO:0007669"/>
    <property type="project" value="InterPro"/>
</dbReference>
<dbReference type="GO" id="GO:0006412">
    <property type="term" value="P:translation"/>
    <property type="evidence" value="ECO:0007669"/>
    <property type="project" value="UniProtKB-UniRule"/>
</dbReference>
<dbReference type="CDD" id="cd00387">
    <property type="entry name" value="Ribosomal_L7_L12"/>
    <property type="match status" value="1"/>
</dbReference>
<dbReference type="FunFam" id="1.20.5.710:FF:000004">
    <property type="entry name" value="50S ribosomal protein L7/L12"/>
    <property type="match status" value="1"/>
</dbReference>
<dbReference type="FunFam" id="3.30.1390.10:FF:000001">
    <property type="entry name" value="50S ribosomal protein L7/L12"/>
    <property type="match status" value="1"/>
</dbReference>
<dbReference type="Gene3D" id="3.30.1390.10">
    <property type="match status" value="1"/>
</dbReference>
<dbReference type="Gene3D" id="1.20.5.710">
    <property type="entry name" value="Single helix bin"/>
    <property type="match status" value="1"/>
</dbReference>
<dbReference type="HAMAP" id="MF_00368">
    <property type="entry name" value="Ribosomal_bL12"/>
    <property type="match status" value="1"/>
</dbReference>
<dbReference type="InterPro" id="IPR000206">
    <property type="entry name" value="Ribosomal_bL12"/>
</dbReference>
<dbReference type="InterPro" id="IPR013823">
    <property type="entry name" value="Ribosomal_bL12_C"/>
</dbReference>
<dbReference type="InterPro" id="IPR014719">
    <property type="entry name" value="Ribosomal_bL12_C/ClpS-like"/>
</dbReference>
<dbReference type="InterPro" id="IPR008932">
    <property type="entry name" value="Ribosomal_bL12_oligo"/>
</dbReference>
<dbReference type="InterPro" id="IPR036235">
    <property type="entry name" value="Ribosomal_bL12_oligo_N_sf"/>
</dbReference>
<dbReference type="NCBIfam" id="TIGR00855">
    <property type="entry name" value="L12"/>
    <property type="match status" value="1"/>
</dbReference>
<dbReference type="PANTHER" id="PTHR45987">
    <property type="entry name" value="39S RIBOSOMAL PROTEIN L12"/>
    <property type="match status" value="1"/>
</dbReference>
<dbReference type="PANTHER" id="PTHR45987:SF4">
    <property type="entry name" value="LARGE RIBOSOMAL SUBUNIT PROTEIN BL12M"/>
    <property type="match status" value="1"/>
</dbReference>
<dbReference type="Pfam" id="PF00542">
    <property type="entry name" value="Ribosomal_L12"/>
    <property type="match status" value="1"/>
</dbReference>
<dbReference type="Pfam" id="PF16320">
    <property type="entry name" value="Ribosomal_L12_N"/>
    <property type="match status" value="1"/>
</dbReference>
<dbReference type="SUPFAM" id="SSF54736">
    <property type="entry name" value="ClpS-like"/>
    <property type="match status" value="1"/>
</dbReference>
<dbReference type="SUPFAM" id="SSF48300">
    <property type="entry name" value="Ribosomal protein L7/12, oligomerisation (N-terminal) domain"/>
    <property type="match status" value="1"/>
</dbReference>
<gene>
    <name evidence="1" type="primary">rplL</name>
    <name type="ordered locus">HPAG1_1138</name>
</gene>
<accession>Q1CS67</accession>
<comment type="function">
    <text evidence="1">Forms part of the ribosomal stalk which helps the ribosome interact with GTP-bound translation factors. Is thus essential for accurate translation.</text>
</comment>
<comment type="subunit">
    <text evidence="1">Homodimer. Part of the ribosomal stalk of the 50S ribosomal subunit. Forms a multimeric L10(L12)X complex, where L10 forms an elongated spine to which 2 to 4 L12 dimers bind in a sequential fashion. Binds GTP-bound translation factors.</text>
</comment>
<comment type="similarity">
    <text evidence="1">Belongs to the bacterial ribosomal protein bL12 family.</text>
</comment>
<proteinExistence type="inferred from homology"/>
<evidence type="ECO:0000255" key="1">
    <source>
        <dbReference type="HAMAP-Rule" id="MF_00368"/>
    </source>
</evidence>
<evidence type="ECO:0000305" key="2"/>
<feature type="chain" id="PRO_1000007020" description="Large ribosomal subunit protein bL12">
    <location>
        <begin position="1"/>
        <end position="125"/>
    </location>
</feature>
<sequence>MAISKEEVLEYIGSLSVLELSELVKMFEEKFGVSATPTVVAGAAVAGGAAAESEEKTEFNVILADSGAEKIKVIKVVREITGLGLKEAKDATEKTPHVLKEGVNKEEAETIKKKLEEVGAKVEVK</sequence>
<keyword id="KW-0687">Ribonucleoprotein</keyword>
<keyword id="KW-0689">Ribosomal protein</keyword>
<organism>
    <name type="scientific">Helicobacter pylori (strain HPAG1)</name>
    <dbReference type="NCBI Taxonomy" id="357544"/>
    <lineage>
        <taxon>Bacteria</taxon>
        <taxon>Pseudomonadati</taxon>
        <taxon>Campylobacterota</taxon>
        <taxon>Epsilonproteobacteria</taxon>
        <taxon>Campylobacterales</taxon>
        <taxon>Helicobacteraceae</taxon>
        <taxon>Helicobacter</taxon>
    </lineage>
</organism>
<reference key="1">
    <citation type="journal article" date="2006" name="Proc. Natl. Acad. Sci. U.S.A.">
        <title>The complete genome sequence of a chronic atrophic gastritis Helicobacter pylori strain: evolution during disease progression.</title>
        <authorList>
            <person name="Oh J.D."/>
            <person name="Kling-Baeckhed H."/>
            <person name="Giannakis M."/>
            <person name="Xu J."/>
            <person name="Fulton R.S."/>
            <person name="Fulton L.A."/>
            <person name="Cordum H.S."/>
            <person name="Wang C."/>
            <person name="Elliott G."/>
            <person name="Edwards J."/>
            <person name="Mardis E.R."/>
            <person name="Engstrand L.G."/>
            <person name="Gordon J.I."/>
        </authorList>
    </citation>
    <scope>NUCLEOTIDE SEQUENCE [LARGE SCALE GENOMIC DNA]</scope>
    <source>
        <strain>HPAG1</strain>
    </source>
</reference>
<name>RL7_HELPH</name>